<sequence length="94" mass="10953">MPSVVPQERQQVTRKHYPNYKVIVLNDDFNTFQHVAACLMKYIPNMTSDRAWELTNQVHYEGQAIVWVGPQEQAELYHEQLLRAGLTMAPLEPE</sequence>
<organism>
    <name type="scientific">Thermosynechococcus vestitus (strain NIES-2133 / IAM M-273 / BP-1)</name>
    <dbReference type="NCBI Taxonomy" id="197221"/>
    <lineage>
        <taxon>Bacteria</taxon>
        <taxon>Bacillati</taxon>
        <taxon>Cyanobacteriota</taxon>
        <taxon>Cyanophyceae</taxon>
        <taxon>Acaryochloridales</taxon>
        <taxon>Thermosynechococcaceae</taxon>
        <taxon>Thermosynechococcus</taxon>
    </lineage>
</organism>
<protein>
    <recommendedName>
        <fullName evidence="1">ATP-dependent Clp protease adapter protein ClpS</fullName>
    </recommendedName>
</protein>
<feature type="chain" id="PRO_0000215753" description="ATP-dependent Clp protease adapter protein ClpS">
    <location>
        <begin position="1"/>
        <end position="94"/>
    </location>
</feature>
<keyword id="KW-1185">Reference proteome</keyword>
<comment type="function">
    <text evidence="1">Involved in the modulation of the specificity of the ClpAP-mediated ATP-dependent protein degradation.</text>
</comment>
<comment type="subunit">
    <text evidence="1">Binds to the N-terminal domain of the chaperone ClpA.</text>
</comment>
<comment type="similarity">
    <text evidence="1">Belongs to the ClpS family.</text>
</comment>
<reference key="1">
    <citation type="journal article" date="2002" name="DNA Res.">
        <title>Complete genome structure of the thermophilic cyanobacterium Thermosynechococcus elongatus BP-1.</title>
        <authorList>
            <person name="Nakamura Y."/>
            <person name="Kaneko T."/>
            <person name="Sato S."/>
            <person name="Ikeuchi M."/>
            <person name="Katoh H."/>
            <person name="Sasamoto S."/>
            <person name="Watanabe A."/>
            <person name="Iriguchi M."/>
            <person name="Kawashima K."/>
            <person name="Kimura T."/>
            <person name="Kishida Y."/>
            <person name="Kiyokawa C."/>
            <person name="Kohara M."/>
            <person name="Matsumoto M."/>
            <person name="Matsuno A."/>
            <person name="Nakazaki N."/>
            <person name="Shimpo S."/>
            <person name="Sugimoto M."/>
            <person name="Takeuchi C."/>
            <person name="Yamada M."/>
            <person name="Tabata S."/>
        </authorList>
    </citation>
    <scope>NUCLEOTIDE SEQUENCE [LARGE SCALE GENOMIC DNA]</scope>
    <source>
        <strain>NIES-2133 / IAM M-273 / BP-1</strain>
    </source>
</reference>
<accession>Q8DJY3</accession>
<dbReference type="EMBL" id="BA000039">
    <property type="protein sequence ID" value="BAC08640.1"/>
    <property type="molecule type" value="Genomic_DNA"/>
</dbReference>
<dbReference type="RefSeq" id="NP_681878.1">
    <property type="nucleotide sequence ID" value="NC_004113.1"/>
</dbReference>
<dbReference type="RefSeq" id="WP_011056930.1">
    <property type="nucleotide sequence ID" value="NC_004113.1"/>
</dbReference>
<dbReference type="SMR" id="Q8DJY3"/>
<dbReference type="STRING" id="197221.gene:10747681"/>
<dbReference type="EnsemblBacteria" id="BAC08640">
    <property type="protein sequence ID" value="BAC08640"/>
    <property type="gene ID" value="BAC08640"/>
</dbReference>
<dbReference type="KEGG" id="tel:tsr1087"/>
<dbReference type="PATRIC" id="fig|197221.4.peg.1141"/>
<dbReference type="eggNOG" id="COG2127">
    <property type="taxonomic scope" value="Bacteria"/>
</dbReference>
<dbReference type="Proteomes" id="UP000000440">
    <property type="component" value="Chromosome"/>
</dbReference>
<dbReference type="GO" id="GO:0030163">
    <property type="term" value="P:protein catabolic process"/>
    <property type="evidence" value="ECO:0007669"/>
    <property type="project" value="InterPro"/>
</dbReference>
<dbReference type="GO" id="GO:0006508">
    <property type="term" value="P:proteolysis"/>
    <property type="evidence" value="ECO:0007669"/>
    <property type="project" value="UniProtKB-UniRule"/>
</dbReference>
<dbReference type="Gene3D" id="3.30.1390.10">
    <property type="match status" value="1"/>
</dbReference>
<dbReference type="HAMAP" id="MF_00302">
    <property type="entry name" value="ClpS"/>
    <property type="match status" value="1"/>
</dbReference>
<dbReference type="InterPro" id="IPR022935">
    <property type="entry name" value="ClpS"/>
</dbReference>
<dbReference type="InterPro" id="IPR003769">
    <property type="entry name" value="ClpS_core"/>
</dbReference>
<dbReference type="InterPro" id="IPR014719">
    <property type="entry name" value="Ribosomal_bL12_C/ClpS-like"/>
</dbReference>
<dbReference type="NCBIfam" id="NF009563">
    <property type="entry name" value="PRK13019.1-3"/>
    <property type="match status" value="1"/>
</dbReference>
<dbReference type="PANTHER" id="PTHR33473:SF3">
    <property type="entry name" value="ATP-DEPENDENT CLP PROTEASE ADAPTER PROTEIN CLPS"/>
    <property type="match status" value="1"/>
</dbReference>
<dbReference type="PANTHER" id="PTHR33473">
    <property type="entry name" value="ATP-DEPENDENT CLP PROTEASE ADAPTER PROTEIN CLPS1, CHLOROPLASTIC"/>
    <property type="match status" value="1"/>
</dbReference>
<dbReference type="Pfam" id="PF02617">
    <property type="entry name" value="ClpS"/>
    <property type="match status" value="1"/>
</dbReference>
<dbReference type="SUPFAM" id="SSF54736">
    <property type="entry name" value="ClpS-like"/>
    <property type="match status" value="1"/>
</dbReference>
<gene>
    <name evidence="1" type="primary">clpS</name>
    <name type="ordered locus">tsr1087</name>
</gene>
<evidence type="ECO:0000255" key="1">
    <source>
        <dbReference type="HAMAP-Rule" id="MF_00302"/>
    </source>
</evidence>
<proteinExistence type="inferred from homology"/>
<name>CLPS_THEVB</name>